<keyword id="KW-1003">Cell membrane</keyword>
<keyword id="KW-0249">Electron transport</keyword>
<keyword id="KW-0349">Heme</keyword>
<keyword id="KW-0408">Iron</keyword>
<keyword id="KW-0472">Membrane</keyword>
<keyword id="KW-0479">Metal-binding</keyword>
<keyword id="KW-1185">Reference proteome</keyword>
<keyword id="KW-0813">Transport</keyword>
<sequence>MRRSLTAGLALVLIAGAAGLWLTRPVKSDPELFAGLTGEASRGERIFWAGGCASCHAAPDASGEARLVLSGGERLTTDFGTFVVPNISPDPDHGIGGWTVADLDSALRHGTSPERSHYYPSFPYTSYAHVEPQDVADLKAFLDTLPPSDRADEPHDLAFPFNQRIILGGWKLLAGGPSWIVEGDLAPEEERGRYLVEGLGHCGECHTPRNGLGLRDKSRWLAGGPNPEGRGTIPNITPAKLDWSAGDIAEYLSSGFTPDYDSAGGQMADVVRNTSQLPDEDRRAIAAYLKRVPAIE</sequence>
<evidence type="ECO:0000255" key="1">
    <source>
        <dbReference type="PROSITE-ProRule" id="PRU00433"/>
    </source>
</evidence>
<feature type="chain" id="PRO_0000108443" description="Diheme cytochrome c-type">
    <location>
        <begin position="1"/>
        <end position="296"/>
    </location>
</feature>
<feature type="binding site" description="covalent" evidence="1">
    <location>
        <position position="52"/>
    </location>
    <ligand>
        <name>heme c</name>
        <dbReference type="ChEBI" id="CHEBI:61717"/>
        <label>1</label>
    </ligand>
</feature>
<feature type="binding site" description="covalent" evidence="1">
    <location>
        <position position="55"/>
    </location>
    <ligand>
        <name>heme c</name>
        <dbReference type="ChEBI" id="CHEBI:61717"/>
        <label>1</label>
    </ligand>
</feature>
<feature type="binding site" description="axial binding residue" evidence="1">
    <location>
        <position position="56"/>
    </location>
    <ligand>
        <name>heme c</name>
        <dbReference type="ChEBI" id="CHEBI:61717"/>
        <label>1</label>
    </ligand>
    <ligandPart>
        <name>Fe</name>
        <dbReference type="ChEBI" id="CHEBI:18248"/>
    </ligandPart>
</feature>
<feature type="binding site" description="covalent" evidence="1">
    <location>
        <position position="202"/>
    </location>
    <ligand>
        <name>heme c</name>
        <dbReference type="ChEBI" id="CHEBI:61717"/>
        <label>2</label>
    </ligand>
</feature>
<feature type="binding site" description="covalent" evidence="1">
    <location>
        <position position="205"/>
    </location>
    <ligand>
        <name>heme c</name>
        <dbReference type="ChEBI" id="CHEBI:61717"/>
        <label>2</label>
    </ligand>
</feature>
<feature type="binding site" description="axial binding residue" evidence="1">
    <location>
        <position position="206"/>
    </location>
    <ligand>
        <name>heme c</name>
        <dbReference type="ChEBI" id="CHEBI:61717"/>
        <label>2</label>
    </ligand>
    <ligandPart>
        <name>Fe</name>
        <dbReference type="ChEBI" id="CHEBI:18248"/>
    </ligandPart>
</feature>
<accession>Q53143</accession>
<accession>Q3J2P3</accession>
<reference key="1">
    <citation type="journal article" date="1995" name="J. Bacteriol.">
        <title>Organization and expression of the Rhodobacter sphaeroides cycFG operon.</title>
        <authorList>
            <person name="Flory J.E."/>
            <person name="Donohue T.J."/>
        </authorList>
    </citation>
    <scope>NUCLEOTIDE SEQUENCE [GENOMIC DNA]</scope>
</reference>
<reference key="2">
    <citation type="submission" date="2005-09" db="EMBL/GenBank/DDBJ databases">
        <title>Complete sequence of chromosome 1 of Rhodobacter sphaeroides 2.4.1.</title>
        <authorList>
            <person name="Copeland A."/>
            <person name="Lucas S."/>
            <person name="Lapidus A."/>
            <person name="Barry K."/>
            <person name="Detter J.C."/>
            <person name="Glavina T."/>
            <person name="Hammon N."/>
            <person name="Israni S."/>
            <person name="Pitluck S."/>
            <person name="Richardson P."/>
            <person name="Mackenzie C."/>
            <person name="Choudhary M."/>
            <person name="Larimer F."/>
            <person name="Hauser L.J."/>
            <person name="Land M."/>
            <person name="Donohue T.J."/>
            <person name="Kaplan S."/>
        </authorList>
    </citation>
    <scope>NUCLEOTIDE SEQUENCE [LARGE SCALE GENOMIC DNA]</scope>
    <source>
        <strain>ATCC 17023 / DSM 158 / JCM 6121 / CCUG 31486 / LMG 2827 / NBRC 12203 / NCIMB 8253 / ATH 2.4.1.</strain>
    </source>
</reference>
<comment type="function">
    <text>Particularly expressed when cells generate energy via aerobic respiration.</text>
</comment>
<comment type="subcellular location">
    <subcellularLocation>
        <location>Cell membrane</location>
        <topology>Peripheral membrane protein</topology>
    </subcellularLocation>
</comment>
<comment type="PTM">
    <text>Binds 2 heme c groups covalently per subunit.</text>
</comment>
<gene>
    <name type="primary">cycG</name>
    <name type="ordered locus">RHOS4_13730</name>
    <name type="ORF">RSP_2784</name>
</gene>
<protein>
    <recommendedName>
        <fullName>Diheme cytochrome c-type</fullName>
    </recommendedName>
</protein>
<name>CYCG_CERS4</name>
<proteinExistence type="predicted"/>
<organism>
    <name type="scientific">Cereibacter sphaeroides (strain ATCC 17023 / DSM 158 / JCM 6121 / CCUG 31486 / LMG 2827 / NBRC 12203 / NCIMB 8253 / ATH 2.4.1.)</name>
    <name type="common">Rhodobacter sphaeroides</name>
    <dbReference type="NCBI Taxonomy" id="272943"/>
    <lineage>
        <taxon>Bacteria</taxon>
        <taxon>Pseudomonadati</taxon>
        <taxon>Pseudomonadota</taxon>
        <taxon>Alphaproteobacteria</taxon>
        <taxon>Rhodobacterales</taxon>
        <taxon>Paracoccaceae</taxon>
        <taxon>Cereibacter</taxon>
    </lineage>
</organism>
<dbReference type="EMBL" id="L36880">
    <property type="protein sequence ID" value="AAD09146.1"/>
    <property type="molecule type" value="Genomic_DNA"/>
</dbReference>
<dbReference type="EMBL" id="CP000143">
    <property type="protein sequence ID" value="ABA78941.1"/>
    <property type="molecule type" value="Genomic_DNA"/>
</dbReference>
<dbReference type="RefSeq" id="WP_011337741.1">
    <property type="nucleotide sequence ID" value="NC_007493.2"/>
</dbReference>
<dbReference type="RefSeq" id="YP_352842.1">
    <property type="nucleotide sequence ID" value="NC_007493.2"/>
</dbReference>
<dbReference type="SMR" id="Q53143"/>
<dbReference type="STRING" id="272943.RSP_2784"/>
<dbReference type="EnsemblBacteria" id="ABA78941">
    <property type="protein sequence ID" value="ABA78941"/>
    <property type="gene ID" value="RSP_2784"/>
</dbReference>
<dbReference type="GeneID" id="3720517"/>
<dbReference type="KEGG" id="rsp:RSP_2784"/>
<dbReference type="PATRIC" id="fig|272943.9.peg.1708"/>
<dbReference type="eggNOG" id="COG2010">
    <property type="taxonomic scope" value="Bacteria"/>
</dbReference>
<dbReference type="OrthoDB" id="9811281at2"/>
<dbReference type="PhylomeDB" id="Q53143"/>
<dbReference type="Proteomes" id="UP000002703">
    <property type="component" value="Chromosome 1"/>
</dbReference>
<dbReference type="GO" id="GO:0005886">
    <property type="term" value="C:plasma membrane"/>
    <property type="evidence" value="ECO:0007669"/>
    <property type="project" value="UniProtKB-SubCell"/>
</dbReference>
<dbReference type="GO" id="GO:0009055">
    <property type="term" value="F:electron transfer activity"/>
    <property type="evidence" value="ECO:0007669"/>
    <property type="project" value="InterPro"/>
</dbReference>
<dbReference type="GO" id="GO:0020037">
    <property type="term" value="F:heme binding"/>
    <property type="evidence" value="ECO:0007669"/>
    <property type="project" value="InterPro"/>
</dbReference>
<dbReference type="GO" id="GO:0046872">
    <property type="term" value="F:metal ion binding"/>
    <property type="evidence" value="ECO:0007669"/>
    <property type="project" value="UniProtKB-KW"/>
</dbReference>
<dbReference type="Gene3D" id="1.10.760.10">
    <property type="entry name" value="Cytochrome c-like domain"/>
    <property type="match status" value="2"/>
</dbReference>
<dbReference type="InterPro" id="IPR009056">
    <property type="entry name" value="Cyt_c-like_dom"/>
</dbReference>
<dbReference type="InterPro" id="IPR036909">
    <property type="entry name" value="Cyt_c-like_dom_sf"/>
</dbReference>
<dbReference type="InterPro" id="IPR051459">
    <property type="entry name" value="Cytochrome_c-type_DH"/>
</dbReference>
<dbReference type="PANTHER" id="PTHR35008:SF8">
    <property type="entry name" value="ALCOHOL DEHYDROGENASE CYTOCHROME C SUBUNIT"/>
    <property type="match status" value="1"/>
</dbReference>
<dbReference type="PANTHER" id="PTHR35008">
    <property type="entry name" value="BLL4482 PROTEIN-RELATED"/>
    <property type="match status" value="1"/>
</dbReference>
<dbReference type="Pfam" id="PF00034">
    <property type="entry name" value="Cytochrom_C"/>
    <property type="match status" value="1"/>
</dbReference>
<dbReference type="SUPFAM" id="SSF46626">
    <property type="entry name" value="Cytochrome c"/>
    <property type="match status" value="2"/>
</dbReference>
<dbReference type="PROSITE" id="PS51007">
    <property type="entry name" value="CYTC"/>
    <property type="match status" value="2"/>
</dbReference>